<proteinExistence type="inferred from homology"/>
<accession>P9WLB0</accession>
<accession>L0T324</accession>
<accession>P0A5C5</accession>
<accession>P58240</accession>
<dbReference type="EMBL" id="AE000516">
    <property type="protein sequence ID" value="AAK44468.1"/>
    <property type="status" value="ALT_INIT"/>
    <property type="molecule type" value="Genomic_DNA"/>
</dbReference>
<dbReference type="RefSeq" id="WP_003401289.1">
    <property type="nucleotide sequence ID" value="NZ_KK341227.1"/>
</dbReference>
<dbReference type="SMR" id="P9WLB0"/>
<dbReference type="KEGG" id="mtc:MT0250"/>
<dbReference type="PATRIC" id="fig|83331.31.peg.268"/>
<dbReference type="HOGENOM" id="CLU_1480510_0_0_11"/>
<dbReference type="Proteomes" id="UP000001020">
    <property type="component" value="Chromosome"/>
</dbReference>
<dbReference type="InterPro" id="IPR022566">
    <property type="entry name" value="DUF2613"/>
</dbReference>
<dbReference type="Pfam" id="PF11021">
    <property type="entry name" value="DUF2613"/>
    <property type="match status" value="1"/>
</dbReference>
<organism>
    <name type="scientific">Mycobacterium tuberculosis (strain CDC 1551 / Oshkosh)</name>
    <dbReference type="NCBI Taxonomy" id="83331"/>
    <lineage>
        <taxon>Bacteria</taxon>
        <taxon>Bacillati</taxon>
        <taxon>Actinomycetota</taxon>
        <taxon>Actinomycetes</taxon>
        <taxon>Mycobacteriales</taxon>
        <taxon>Mycobacteriaceae</taxon>
        <taxon>Mycobacterium</taxon>
        <taxon>Mycobacterium tuberculosis complex</taxon>
    </lineage>
</organism>
<feature type="signal peptide" evidence="1">
    <location>
        <begin position="1"/>
        <end position="32"/>
    </location>
</feature>
<feature type="chain" id="PRO_0000427510" description="Putative secreted protein MT0250">
    <location>
        <begin position="33"/>
        <end position="57"/>
    </location>
</feature>
<feature type="region of interest" description="Disordered" evidence="2">
    <location>
        <begin position="34"/>
        <end position="57"/>
    </location>
</feature>
<evidence type="ECO:0000255" key="1"/>
<evidence type="ECO:0000256" key="2">
    <source>
        <dbReference type="SAM" id="MobiDB-lite"/>
    </source>
</evidence>
<evidence type="ECO:0000305" key="3"/>
<name>Y236A_MYCTO</name>
<gene>
    <name type="ordered locus">MT0250</name>
</gene>
<sequence>MNRIVAPAAASVVVGLLLGAAAIFGVTLMVQQDKKPPLPGGDPSSSVLNRVEYGNRS</sequence>
<comment type="sequence caution" evidence="3">
    <conflict type="erroneous initiation">
        <sequence resource="EMBL-CDS" id="AAK44468"/>
    </conflict>
</comment>
<protein>
    <recommendedName>
        <fullName>Putative secreted protein MT0250</fullName>
    </recommendedName>
</protein>
<keyword id="KW-1185">Reference proteome</keyword>
<keyword id="KW-0732">Signal</keyword>
<reference key="1">
    <citation type="journal article" date="2002" name="J. Bacteriol.">
        <title>Whole-genome comparison of Mycobacterium tuberculosis clinical and laboratory strains.</title>
        <authorList>
            <person name="Fleischmann R.D."/>
            <person name="Alland D."/>
            <person name="Eisen J.A."/>
            <person name="Carpenter L."/>
            <person name="White O."/>
            <person name="Peterson J.D."/>
            <person name="DeBoy R.T."/>
            <person name="Dodson R.J."/>
            <person name="Gwinn M.L."/>
            <person name="Haft D.H."/>
            <person name="Hickey E.K."/>
            <person name="Kolonay J.F."/>
            <person name="Nelson W.C."/>
            <person name="Umayam L.A."/>
            <person name="Ermolaeva M.D."/>
            <person name="Salzberg S.L."/>
            <person name="Delcher A."/>
            <person name="Utterback T.R."/>
            <person name="Weidman J.F."/>
            <person name="Khouri H.M."/>
            <person name="Gill J."/>
            <person name="Mikula A."/>
            <person name="Bishai W."/>
            <person name="Jacobs W.R. Jr."/>
            <person name="Venter J.C."/>
            <person name="Fraser C.M."/>
        </authorList>
    </citation>
    <scope>NUCLEOTIDE SEQUENCE [LARGE SCALE GENOMIC DNA]</scope>
    <source>
        <strain>CDC 1551 / Oshkosh</strain>
    </source>
</reference>